<protein>
    <recommendedName>
        <fullName>Probable basic-leucine zipper transcription factor N</fullName>
    </recommendedName>
</protein>
<name>BZPN_DICDI</name>
<sequence>MYQSIPQQGNYIYNGNNNFFPQQQPQQQQYLNNSNNNNNNNNNNNNNNNNINNNNNNFQQSYNNGNNNNYNNNNGYQQQTSSYDMYGNNVNINNNNNNNVNINSQNNVNNNNNNNNNNNNGNINNNMLMATSSALNNIVKVTNGYQQQQQQQLLQQTTQQQLQQQQQLLQQQQQQIQQQQAALQLQLEQQQQQKMVLMFGDEPMGYLPFSEDKNLMLLSALNTNVDGGSFYGIQQQQQQQQLQQQQLQQQQQLQQQQQQLQQQQIQQQQIQQQQQQQQQQISPIQESASPYYSTPIQSNTMLSIPSSPGIPSSIPQLNNSNNINNNSNNNNNNNNNNNNNNINYNSNMASNFISQHSNNGSNTSSPVPQTTYLQNSGGNFNAYNGSNTNSPITPSSYLQPTTSQDQVIPQQLSPNHDQNQQIIQQQQKILQQQQQQQLLLQQQIQQQQQQQLHQPQSPQLPQSPQQSPQQSPQQLQPQQSPQQPQQQPQQQPQQLQQTQQKTVQRPPIIQPTTIQPQSPQPPQQPQQKQPTINSSITPIQPIQQMIQQLTQNSSTKSTSKASNIPATTAACPKVDLLPNKSPISSYILPHDFEETLAHLSEKQKTRRRASQNLASRNYRQRKKQYVNEVEDRLDDIVQENERLKKELYDSKKILKKLLHENNILKSGGQLPNKSDIPGCTGSEDEDEDDFDQFDQQQQDGSADPSTPVVETEPDISVLVDRLQVDMSITTQDDLTTTLKQFYSTLKNRQDLYINQIKQIVNPCTQAKLALLDGEISPAQSCPFEDPSEKQHSDPNSSPIGDMPSPYEQLEPTKWWSNFCNEANINPEQENRVRQLRQESNLRHKKIIKERTHLNREIREYYHSKVFNGTVNNGGNTKSKKTAASTSTTTTTTSTSTTTTTTTTISTDVDISNNISSPVQSHLVQLSGLLDKLKENIDHENETLIQTYEKLGFILSPFQEALFITKIYNNIFSESSYSNIQMLHGIKDAILYSYVDPTYT</sequence>
<evidence type="ECO:0000250" key="1"/>
<evidence type="ECO:0000255" key="2"/>
<evidence type="ECO:0000255" key="3">
    <source>
        <dbReference type="PROSITE-ProRule" id="PRU00978"/>
    </source>
</evidence>
<evidence type="ECO:0000256" key="4">
    <source>
        <dbReference type="SAM" id="MobiDB-lite"/>
    </source>
</evidence>
<evidence type="ECO:0000305" key="5"/>
<comment type="function">
    <text evidence="1">Probable transcriptional regulator.</text>
</comment>
<comment type="subcellular location">
    <subcellularLocation>
        <location evidence="3">Nucleus</location>
    </subcellularLocation>
</comment>
<comment type="similarity">
    <text evidence="5">Belongs to the bZIP family.</text>
</comment>
<reference key="1">
    <citation type="journal article" date="2005" name="Nature">
        <title>The genome of the social amoeba Dictyostelium discoideum.</title>
        <authorList>
            <person name="Eichinger L."/>
            <person name="Pachebat J.A."/>
            <person name="Gloeckner G."/>
            <person name="Rajandream M.A."/>
            <person name="Sucgang R."/>
            <person name="Berriman M."/>
            <person name="Song J."/>
            <person name="Olsen R."/>
            <person name="Szafranski K."/>
            <person name="Xu Q."/>
            <person name="Tunggal B."/>
            <person name="Kummerfeld S."/>
            <person name="Madera M."/>
            <person name="Konfortov B.A."/>
            <person name="Rivero F."/>
            <person name="Bankier A.T."/>
            <person name="Lehmann R."/>
            <person name="Hamlin N."/>
            <person name="Davies R."/>
            <person name="Gaudet P."/>
            <person name="Fey P."/>
            <person name="Pilcher K."/>
            <person name="Chen G."/>
            <person name="Saunders D."/>
            <person name="Sodergren E.J."/>
            <person name="Davis P."/>
            <person name="Kerhornou A."/>
            <person name="Nie X."/>
            <person name="Hall N."/>
            <person name="Anjard C."/>
            <person name="Hemphill L."/>
            <person name="Bason N."/>
            <person name="Farbrother P."/>
            <person name="Desany B."/>
            <person name="Just E."/>
            <person name="Morio T."/>
            <person name="Rost R."/>
            <person name="Churcher C.M."/>
            <person name="Cooper J."/>
            <person name="Haydock S."/>
            <person name="van Driessche N."/>
            <person name="Cronin A."/>
            <person name="Goodhead I."/>
            <person name="Muzny D.M."/>
            <person name="Mourier T."/>
            <person name="Pain A."/>
            <person name="Lu M."/>
            <person name="Harper D."/>
            <person name="Lindsay R."/>
            <person name="Hauser H."/>
            <person name="James K.D."/>
            <person name="Quiles M."/>
            <person name="Madan Babu M."/>
            <person name="Saito T."/>
            <person name="Buchrieser C."/>
            <person name="Wardroper A."/>
            <person name="Felder M."/>
            <person name="Thangavelu M."/>
            <person name="Johnson D."/>
            <person name="Knights A."/>
            <person name="Loulseged H."/>
            <person name="Mungall K.L."/>
            <person name="Oliver K."/>
            <person name="Price C."/>
            <person name="Quail M.A."/>
            <person name="Urushihara H."/>
            <person name="Hernandez J."/>
            <person name="Rabbinowitsch E."/>
            <person name="Steffen D."/>
            <person name="Sanders M."/>
            <person name="Ma J."/>
            <person name="Kohara Y."/>
            <person name="Sharp S."/>
            <person name="Simmonds M.N."/>
            <person name="Spiegler S."/>
            <person name="Tivey A."/>
            <person name="Sugano S."/>
            <person name="White B."/>
            <person name="Walker D."/>
            <person name="Woodward J.R."/>
            <person name="Winckler T."/>
            <person name="Tanaka Y."/>
            <person name="Shaulsky G."/>
            <person name="Schleicher M."/>
            <person name="Weinstock G.M."/>
            <person name="Rosenthal A."/>
            <person name="Cox E.C."/>
            <person name="Chisholm R.L."/>
            <person name="Gibbs R.A."/>
            <person name="Loomis W.F."/>
            <person name="Platzer M."/>
            <person name="Kay R.R."/>
            <person name="Williams J.G."/>
            <person name="Dear P.H."/>
            <person name="Noegel A.A."/>
            <person name="Barrell B.G."/>
            <person name="Kuspa A."/>
        </authorList>
    </citation>
    <scope>NUCLEOTIDE SEQUENCE [LARGE SCALE GENOMIC DNA]</scope>
    <source>
        <strain>AX4</strain>
    </source>
</reference>
<reference key="2">
    <citation type="journal article" date="2006" name="Development">
        <title>bZIP transcription factor interactions regulate DIF responses in Dictyostelium.</title>
        <authorList>
            <person name="Huang E."/>
            <person name="Blagg S.L."/>
            <person name="Keller T."/>
            <person name="Katoh M."/>
            <person name="Shaulsky G."/>
            <person name="Thompson C.R.L."/>
        </authorList>
    </citation>
    <scope>IDENTIFICATION</scope>
</reference>
<keyword id="KW-0175">Coiled coil</keyword>
<keyword id="KW-0238">DNA-binding</keyword>
<keyword id="KW-0539">Nucleus</keyword>
<keyword id="KW-1185">Reference proteome</keyword>
<keyword id="KW-0804">Transcription</keyword>
<keyword id="KW-0805">Transcription regulation</keyword>
<accession>Q54LU5</accession>
<gene>
    <name type="primary">bzpN</name>
    <name type="ORF">DDB_G0286411</name>
</gene>
<feature type="chain" id="PRO_0000383600" description="Probable basic-leucine zipper transcription factor N">
    <location>
        <begin position="1"/>
        <end position="999"/>
    </location>
</feature>
<feature type="domain" description="bZIP" evidence="3">
    <location>
        <begin position="601"/>
        <end position="664"/>
    </location>
</feature>
<feature type="region of interest" description="Disordered" evidence="4">
    <location>
        <begin position="1"/>
        <end position="126"/>
    </location>
</feature>
<feature type="region of interest" description="Disordered" evidence="4">
    <location>
        <begin position="286"/>
        <end position="406"/>
    </location>
</feature>
<feature type="region of interest" description="Disordered" evidence="4">
    <location>
        <begin position="450"/>
        <end position="533"/>
    </location>
</feature>
<feature type="region of interest" description="Disordered" evidence="4">
    <location>
        <begin position="601"/>
        <end position="620"/>
    </location>
</feature>
<feature type="region of interest" description="Basic motif" evidence="3">
    <location>
        <begin position="602"/>
        <end position="632"/>
    </location>
</feature>
<feature type="region of interest" description="Leucine-zipper" evidence="3">
    <location>
        <begin position="636"/>
        <end position="643"/>
    </location>
</feature>
<feature type="region of interest" description="Disordered" evidence="4">
    <location>
        <begin position="665"/>
        <end position="711"/>
    </location>
</feature>
<feature type="region of interest" description="Disordered" evidence="4">
    <location>
        <begin position="779"/>
        <end position="807"/>
    </location>
</feature>
<feature type="region of interest" description="Disordered" evidence="4">
    <location>
        <begin position="870"/>
        <end position="899"/>
    </location>
</feature>
<feature type="coiled-coil region" evidence="2">
    <location>
        <begin position="148"/>
        <end position="198"/>
    </location>
</feature>
<feature type="coiled-coil region" evidence="2">
    <location>
        <begin position="232"/>
        <end position="282"/>
    </location>
</feature>
<feature type="coiled-coil region" evidence="2">
    <location>
        <begin position="423"/>
        <end position="451"/>
    </location>
</feature>
<feature type="coiled-coil region" evidence="2">
    <location>
        <begin position="921"/>
        <end position="950"/>
    </location>
</feature>
<feature type="compositionally biased region" description="Low complexity" evidence="4">
    <location>
        <begin position="1"/>
        <end position="79"/>
    </location>
</feature>
<feature type="compositionally biased region" description="Low complexity" evidence="4">
    <location>
        <begin position="88"/>
        <end position="126"/>
    </location>
</feature>
<feature type="compositionally biased region" description="Polar residues" evidence="4">
    <location>
        <begin position="286"/>
        <end position="302"/>
    </location>
</feature>
<feature type="compositionally biased region" description="Low complexity" evidence="4">
    <location>
        <begin position="303"/>
        <end position="347"/>
    </location>
</feature>
<feature type="compositionally biased region" description="Polar residues" evidence="4">
    <location>
        <begin position="348"/>
        <end position="406"/>
    </location>
</feature>
<feature type="compositionally biased region" description="Low complexity" evidence="4">
    <location>
        <begin position="450"/>
        <end position="517"/>
    </location>
</feature>
<feature type="compositionally biased region" description="Acidic residues" evidence="4">
    <location>
        <begin position="682"/>
        <end position="692"/>
    </location>
</feature>
<proteinExistence type="inferred from homology"/>
<organism>
    <name type="scientific">Dictyostelium discoideum</name>
    <name type="common">Social amoeba</name>
    <dbReference type="NCBI Taxonomy" id="44689"/>
    <lineage>
        <taxon>Eukaryota</taxon>
        <taxon>Amoebozoa</taxon>
        <taxon>Evosea</taxon>
        <taxon>Eumycetozoa</taxon>
        <taxon>Dictyostelia</taxon>
        <taxon>Dictyosteliales</taxon>
        <taxon>Dictyosteliaceae</taxon>
        <taxon>Dictyostelium</taxon>
    </lineage>
</organism>
<dbReference type="EMBL" id="AAFI02000085">
    <property type="protein sequence ID" value="EAL64230.1"/>
    <property type="molecule type" value="Genomic_DNA"/>
</dbReference>
<dbReference type="RefSeq" id="XP_637735.1">
    <property type="nucleotide sequence ID" value="XM_632643.1"/>
</dbReference>
<dbReference type="SMR" id="Q54LU5"/>
<dbReference type="FunCoup" id="Q54LU5">
    <property type="interactions" value="490"/>
</dbReference>
<dbReference type="STRING" id="44689.Q54LU5"/>
<dbReference type="GlyGen" id="Q54LU5">
    <property type="glycosylation" value="1 site"/>
</dbReference>
<dbReference type="PaxDb" id="44689-DDB0220085"/>
<dbReference type="EnsemblProtists" id="EAL64230">
    <property type="protein sequence ID" value="EAL64230"/>
    <property type="gene ID" value="DDB_G0286411"/>
</dbReference>
<dbReference type="GeneID" id="8625600"/>
<dbReference type="KEGG" id="ddi:DDB_G0286411"/>
<dbReference type="dictyBase" id="DDB_G0286411">
    <property type="gene designation" value="bzpN"/>
</dbReference>
<dbReference type="VEuPathDB" id="AmoebaDB:DDB_G0286411"/>
<dbReference type="HOGENOM" id="CLU_300047_0_0_1"/>
<dbReference type="InParanoid" id="Q54LU5"/>
<dbReference type="OMA" id="IVNPCTQ"/>
<dbReference type="PRO" id="PR:Q54LU5"/>
<dbReference type="Proteomes" id="UP000002195">
    <property type="component" value="Chromosome 4"/>
</dbReference>
<dbReference type="GO" id="GO:0031410">
    <property type="term" value="C:cytoplasmic vesicle"/>
    <property type="evidence" value="ECO:0000314"/>
    <property type="project" value="dictyBase"/>
</dbReference>
<dbReference type="GO" id="GO:0005634">
    <property type="term" value="C:nucleus"/>
    <property type="evidence" value="ECO:0007669"/>
    <property type="project" value="UniProtKB-SubCell"/>
</dbReference>
<dbReference type="GO" id="GO:0003700">
    <property type="term" value="F:DNA-binding transcription factor activity"/>
    <property type="evidence" value="ECO:0007669"/>
    <property type="project" value="InterPro"/>
</dbReference>
<dbReference type="GO" id="GO:0043565">
    <property type="term" value="F:sequence-specific DNA binding"/>
    <property type="evidence" value="ECO:0000318"/>
    <property type="project" value="GO_Central"/>
</dbReference>
<dbReference type="GO" id="GO:1903665">
    <property type="term" value="P:negative regulation of asexual reproduction"/>
    <property type="evidence" value="ECO:0000315"/>
    <property type="project" value="dictyBase"/>
</dbReference>
<dbReference type="GO" id="GO:0010468">
    <property type="term" value="P:regulation of gene expression"/>
    <property type="evidence" value="ECO:0000318"/>
    <property type="project" value="GO_Central"/>
</dbReference>
<dbReference type="CDD" id="cd14686">
    <property type="entry name" value="bZIP"/>
    <property type="match status" value="1"/>
</dbReference>
<dbReference type="InterPro" id="IPR004827">
    <property type="entry name" value="bZIP"/>
</dbReference>
<dbReference type="InterPro" id="IPR046347">
    <property type="entry name" value="bZIP_sf"/>
</dbReference>
<dbReference type="PANTHER" id="PTHR14312:SF7">
    <property type="entry name" value="BASIC-LEUCINE ZIPPER TRANSCRIPTION FACTOR B-RELATED"/>
    <property type="match status" value="1"/>
</dbReference>
<dbReference type="PANTHER" id="PTHR14312">
    <property type="entry name" value="CREB/ATF BZIP TRANSCRIPTION FACTOR"/>
    <property type="match status" value="1"/>
</dbReference>
<dbReference type="Pfam" id="PF00170">
    <property type="entry name" value="bZIP_1"/>
    <property type="match status" value="1"/>
</dbReference>
<dbReference type="SMART" id="SM00338">
    <property type="entry name" value="BRLZ"/>
    <property type="match status" value="1"/>
</dbReference>
<dbReference type="SUPFAM" id="SSF57959">
    <property type="entry name" value="Leucine zipper domain"/>
    <property type="match status" value="1"/>
</dbReference>
<dbReference type="PROSITE" id="PS50217">
    <property type="entry name" value="BZIP"/>
    <property type="match status" value="1"/>
</dbReference>